<proteinExistence type="evidence at protein level"/>
<keyword id="KW-0067">ATP-binding</keyword>
<keyword id="KW-0903">Direct protein sequencing</keyword>
<keyword id="KW-0418">Kinase</keyword>
<keyword id="KW-0460">Magnesium</keyword>
<keyword id="KW-0479">Metal-binding</keyword>
<keyword id="KW-0496">Mitochondrion</keyword>
<keyword id="KW-0546">Nucleotide metabolism</keyword>
<keyword id="KW-0547">Nucleotide-binding</keyword>
<keyword id="KW-0597">Phosphoprotein</keyword>
<keyword id="KW-1185">Reference proteome</keyword>
<keyword id="KW-0808">Transferase</keyword>
<keyword id="KW-0809">Transit peptide</keyword>
<protein>
    <recommendedName>
        <fullName>Nucleoside diphosphate kinase, mitochondrial</fullName>
        <shortName>NDK</shortName>
        <shortName>NDP kinase</shortName>
        <ecNumber>2.7.4.6</ecNumber>
    </recommendedName>
</protein>
<organism>
    <name type="scientific">Dictyostelium discoideum</name>
    <name type="common">Social amoeba</name>
    <dbReference type="NCBI Taxonomy" id="44689"/>
    <lineage>
        <taxon>Eukaryota</taxon>
        <taxon>Amoebozoa</taxon>
        <taxon>Evosea</taxon>
        <taxon>Eumycetozoa</taxon>
        <taxon>Dictyostelia</taxon>
        <taxon>Dictyosteliales</taxon>
        <taxon>Dictyosteliaceae</taxon>
        <taxon>Dictyostelium</taxon>
    </lineage>
</organism>
<reference key="1">
    <citation type="journal article" date="1993" name="J. Biol. Chem.">
        <title>Separate nuclear genes encode cytosolic and mitochondrial nucleoside diphosphate kinase in Dictyostelium discoideum.</title>
        <authorList>
            <person name="Troll H."/>
            <person name="Winckler T."/>
            <person name="Lascu I."/>
            <person name="Mueller N."/>
            <person name="Saurin W."/>
            <person name="Veron M."/>
            <person name="Mutzel R."/>
        </authorList>
    </citation>
    <scope>NUCLEOTIDE SEQUENCE [GENOMIC DNA]</scope>
    <scope>PROTEIN SEQUENCE OF 58-64</scope>
    <source>
        <strain>AX2</strain>
    </source>
</reference>
<reference key="2">
    <citation type="journal article" date="2005" name="Nature">
        <title>The genome of the social amoeba Dictyostelium discoideum.</title>
        <authorList>
            <person name="Eichinger L."/>
            <person name="Pachebat J.A."/>
            <person name="Gloeckner G."/>
            <person name="Rajandream M.A."/>
            <person name="Sucgang R."/>
            <person name="Berriman M."/>
            <person name="Song J."/>
            <person name="Olsen R."/>
            <person name="Szafranski K."/>
            <person name="Xu Q."/>
            <person name="Tunggal B."/>
            <person name="Kummerfeld S."/>
            <person name="Madera M."/>
            <person name="Konfortov B.A."/>
            <person name="Rivero F."/>
            <person name="Bankier A.T."/>
            <person name="Lehmann R."/>
            <person name="Hamlin N."/>
            <person name="Davies R."/>
            <person name="Gaudet P."/>
            <person name="Fey P."/>
            <person name="Pilcher K."/>
            <person name="Chen G."/>
            <person name="Saunders D."/>
            <person name="Sodergren E.J."/>
            <person name="Davis P."/>
            <person name="Kerhornou A."/>
            <person name="Nie X."/>
            <person name="Hall N."/>
            <person name="Anjard C."/>
            <person name="Hemphill L."/>
            <person name="Bason N."/>
            <person name="Farbrother P."/>
            <person name="Desany B."/>
            <person name="Just E."/>
            <person name="Morio T."/>
            <person name="Rost R."/>
            <person name="Churcher C.M."/>
            <person name="Cooper J."/>
            <person name="Haydock S."/>
            <person name="van Driessche N."/>
            <person name="Cronin A."/>
            <person name="Goodhead I."/>
            <person name="Muzny D.M."/>
            <person name="Mourier T."/>
            <person name="Pain A."/>
            <person name="Lu M."/>
            <person name="Harper D."/>
            <person name="Lindsay R."/>
            <person name="Hauser H."/>
            <person name="James K.D."/>
            <person name="Quiles M."/>
            <person name="Madan Babu M."/>
            <person name="Saito T."/>
            <person name="Buchrieser C."/>
            <person name="Wardroper A."/>
            <person name="Felder M."/>
            <person name="Thangavelu M."/>
            <person name="Johnson D."/>
            <person name="Knights A."/>
            <person name="Loulseged H."/>
            <person name="Mungall K.L."/>
            <person name="Oliver K."/>
            <person name="Price C."/>
            <person name="Quail M.A."/>
            <person name="Urushihara H."/>
            <person name="Hernandez J."/>
            <person name="Rabbinowitsch E."/>
            <person name="Steffen D."/>
            <person name="Sanders M."/>
            <person name="Ma J."/>
            <person name="Kohara Y."/>
            <person name="Sharp S."/>
            <person name="Simmonds M.N."/>
            <person name="Spiegler S."/>
            <person name="Tivey A."/>
            <person name="Sugano S."/>
            <person name="White B."/>
            <person name="Walker D."/>
            <person name="Woodward J.R."/>
            <person name="Winckler T."/>
            <person name="Tanaka Y."/>
            <person name="Shaulsky G."/>
            <person name="Schleicher M."/>
            <person name="Weinstock G.M."/>
            <person name="Rosenthal A."/>
            <person name="Cox E.C."/>
            <person name="Chisholm R.L."/>
            <person name="Gibbs R.A."/>
            <person name="Loomis W.F."/>
            <person name="Platzer M."/>
            <person name="Kay R.R."/>
            <person name="Williams J.G."/>
            <person name="Dear P.H."/>
            <person name="Noegel A.A."/>
            <person name="Barrell B.G."/>
            <person name="Kuspa A."/>
        </authorList>
    </citation>
    <scope>NUCLEOTIDE SEQUENCE [LARGE SCALE GENOMIC DNA]</scope>
    <source>
        <strain>AX4</strain>
    </source>
</reference>
<comment type="function">
    <text>Major role in the synthesis of nucleoside triphosphates other than ATP. The ATP gamma phosphate is transferred to the NDP beta phosphate via a ping-pong mechanism, using a phosphorylated active-site intermediate.</text>
</comment>
<comment type="catalytic activity">
    <reaction>
        <text>a 2'-deoxyribonucleoside 5'-diphosphate + ATP = a 2'-deoxyribonucleoside 5'-triphosphate + ADP</text>
        <dbReference type="Rhea" id="RHEA:44640"/>
        <dbReference type="ChEBI" id="CHEBI:30616"/>
        <dbReference type="ChEBI" id="CHEBI:61560"/>
        <dbReference type="ChEBI" id="CHEBI:73316"/>
        <dbReference type="ChEBI" id="CHEBI:456216"/>
        <dbReference type="EC" id="2.7.4.6"/>
    </reaction>
</comment>
<comment type="catalytic activity">
    <reaction>
        <text>a ribonucleoside 5'-diphosphate + ATP = a ribonucleoside 5'-triphosphate + ADP</text>
        <dbReference type="Rhea" id="RHEA:18113"/>
        <dbReference type="ChEBI" id="CHEBI:30616"/>
        <dbReference type="ChEBI" id="CHEBI:57930"/>
        <dbReference type="ChEBI" id="CHEBI:61557"/>
        <dbReference type="ChEBI" id="CHEBI:456216"/>
        <dbReference type="EC" id="2.7.4.6"/>
    </reaction>
</comment>
<comment type="cofactor">
    <cofactor evidence="1">
        <name>Mg(2+)</name>
        <dbReference type="ChEBI" id="CHEBI:18420"/>
    </cofactor>
</comment>
<comment type="subcellular location">
    <subcellularLocation>
        <location>Mitochondrion intermembrane space</location>
    </subcellularLocation>
</comment>
<comment type="similarity">
    <text evidence="3">Belongs to the NDK family.</text>
</comment>
<name>NDKM_DICDI</name>
<evidence type="ECO:0000250" key="1"/>
<evidence type="ECO:0000269" key="2">
    <source>
    </source>
</evidence>
<evidence type="ECO:0000305" key="3"/>
<feature type="transit peptide" description="Mitochondrion" evidence="2">
    <location>
        <begin position="1"/>
        <end position="57"/>
    </location>
</feature>
<feature type="chain" id="PRO_0000019430" description="Nucleoside diphosphate kinase, mitochondrial">
    <location>
        <begin position="58"/>
        <end position="220"/>
    </location>
</feature>
<feature type="active site" description="Pros-phosphohistidine intermediate" evidence="1">
    <location>
        <position position="186"/>
    </location>
</feature>
<feature type="binding site" evidence="1">
    <location>
        <position position="80"/>
    </location>
    <ligand>
        <name>ATP</name>
        <dbReference type="ChEBI" id="CHEBI:30616"/>
    </ligand>
</feature>
<feature type="binding site" evidence="1">
    <location>
        <position position="128"/>
    </location>
    <ligand>
        <name>ATP</name>
        <dbReference type="ChEBI" id="CHEBI:30616"/>
    </ligand>
</feature>
<feature type="binding site" evidence="1">
    <location>
        <position position="156"/>
    </location>
    <ligand>
        <name>ATP</name>
        <dbReference type="ChEBI" id="CHEBI:30616"/>
    </ligand>
</feature>
<feature type="binding site" evidence="1">
    <location>
        <position position="162"/>
    </location>
    <ligand>
        <name>ATP</name>
        <dbReference type="ChEBI" id="CHEBI:30616"/>
    </ligand>
</feature>
<feature type="binding site" evidence="1">
    <location>
        <position position="173"/>
    </location>
    <ligand>
        <name>ATP</name>
        <dbReference type="ChEBI" id="CHEBI:30616"/>
    </ligand>
</feature>
<feature type="binding site" evidence="1">
    <location>
        <position position="183"/>
    </location>
    <ligand>
        <name>ATP</name>
        <dbReference type="ChEBI" id="CHEBI:30616"/>
    </ligand>
</feature>
<feature type="sequence conflict" description="In Ref. 1; AAA16162." evidence="3" ref="1">
    <original>A</original>
    <variation>G</variation>
    <location>
        <position position="30"/>
    </location>
</feature>
<feature type="sequence conflict" description="In Ref. 1; AAA16162." evidence="3" ref="1">
    <original>VS</original>
    <variation>WN</variation>
    <location>
        <begin position="81"/>
        <end position="82"/>
    </location>
</feature>
<feature type="sequence conflict" description="In Ref. 1; AAA16162." evidence="3" ref="1">
    <original>D</original>
    <variation>V</variation>
    <location>
        <position position="163"/>
    </location>
</feature>
<gene>
    <name type="primary">ndkM</name>
    <name type="synonym">guk</name>
    <name type="synonym">ndkA</name>
    <name type="ORF">DDB_G0279911</name>
</gene>
<accession>P34093</accession>
<accession>Q54W33</accession>
<sequence>MFSRFARAFPKILASGASQRTFATVQKAFANPTSKKLIVGSSLLIGSAFATTSFVACENKSVPLVGLPGTNQERSFIAIKVSSTQRRLIGEIIARFEKKGFKLVGIKILVPTPEHAAKHYEDLNKKPFFNGLVKFFSSGAVVAMVFEGKDVVRTGRVLIGATDPSQSAPGTIRFDLCIETGRNIIHGSDSNESAAHEIALWFKEDEIANWVSTNPVYEKM</sequence>
<dbReference type="EC" id="2.7.4.6"/>
<dbReference type="EMBL" id="L23068">
    <property type="protein sequence ID" value="AAA16162.1"/>
    <property type="molecule type" value="Genomic_DNA"/>
</dbReference>
<dbReference type="EMBL" id="AAFI02000035">
    <property type="protein sequence ID" value="EAL67427.1"/>
    <property type="molecule type" value="Genomic_DNA"/>
</dbReference>
<dbReference type="PIR" id="B49547">
    <property type="entry name" value="B49547"/>
</dbReference>
<dbReference type="RefSeq" id="XP_641417.1">
    <property type="nucleotide sequence ID" value="XM_636325.1"/>
</dbReference>
<dbReference type="SMR" id="P34093"/>
<dbReference type="FunCoup" id="P34093">
    <property type="interactions" value="143"/>
</dbReference>
<dbReference type="STRING" id="44689.P34093"/>
<dbReference type="PaxDb" id="44689-DDB0214817"/>
<dbReference type="EnsemblProtists" id="EAL67427">
    <property type="protein sequence ID" value="EAL67427"/>
    <property type="gene ID" value="DDB_G0279911"/>
</dbReference>
<dbReference type="GeneID" id="8622301"/>
<dbReference type="KEGG" id="ddi:DDB_G0279911"/>
<dbReference type="dictyBase" id="DDB_G0279911">
    <property type="gene designation" value="ndkM"/>
</dbReference>
<dbReference type="VEuPathDB" id="AmoebaDB:DDB_G0279911"/>
<dbReference type="eggNOG" id="KOG0888">
    <property type="taxonomic scope" value="Eukaryota"/>
</dbReference>
<dbReference type="HOGENOM" id="CLU_060216_5_0_1"/>
<dbReference type="InParanoid" id="P34093"/>
<dbReference type="OMA" id="EEFVNWT"/>
<dbReference type="PhylomeDB" id="P34093"/>
<dbReference type="Reactome" id="R-DDI-499943">
    <property type="pathway name" value="Interconversion of nucleotide di- and triphosphates"/>
</dbReference>
<dbReference type="Reactome" id="R-DDI-6798695">
    <property type="pathway name" value="Neutrophil degranulation"/>
</dbReference>
<dbReference type="Reactome" id="R-DDI-9748787">
    <property type="pathway name" value="Azathioprine ADME"/>
</dbReference>
<dbReference type="Reactome" id="R-DDI-9755088">
    <property type="pathway name" value="Ribavirin ADME"/>
</dbReference>
<dbReference type="PRO" id="PR:P34093"/>
<dbReference type="Proteomes" id="UP000002195">
    <property type="component" value="Chromosome 3"/>
</dbReference>
<dbReference type="GO" id="GO:0031012">
    <property type="term" value="C:extracellular matrix"/>
    <property type="evidence" value="ECO:0007005"/>
    <property type="project" value="dictyBase"/>
</dbReference>
<dbReference type="GO" id="GO:0005758">
    <property type="term" value="C:mitochondrial intermembrane space"/>
    <property type="evidence" value="ECO:0007669"/>
    <property type="project" value="UniProtKB-SubCell"/>
</dbReference>
<dbReference type="GO" id="GO:0005739">
    <property type="term" value="C:mitochondrion"/>
    <property type="evidence" value="ECO:0000314"/>
    <property type="project" value="dictyBase"/>
</dbReference>
<dbReference type="GO" id="GO:0045335">
    <property type="term" value="C:phagocytic vesicle"/>
    <property type="evidence" value="ECO:0007005"/>
    <property type="project" value="dictyBase"/>
</dbReference>
<dbReference type="GO" id="GO:0005524">
    <property type="term" value="F:ATP binding"/>
    <property type="evidence" value="ECO:0007669"/>
    <property type="project" value="UniProtKB-KW"/>
</dbReference>
<dbReference type="GO" id="GO:0046872">
    <property type="term" value="F:metal ion binding"/>
    <property type="evidence" value="ECO:0007669"/>
    <property type="project" value="UniProtKB-KW"/>
</dbReference>
<dbReference type="GO" id="GO:0004550">
    <property type="term" value="F:nucleoside diphosphate kinase activity"/>
    <property type="evidence" value="ECO:0000250"/>
    <property type="project" value="dictyBase"/>
</dbReference>
<dbReference type="GO" id="GO:0006241">
    <property type="term" value="P:CTP biosynthetic process"/>
    <property type="evidence" value="ECO:0007669"/>
    <property type="project" value="InterPro"/>
</dbReference>
<dbReference type="GO" id="GO:0006183">
    <property type="term" value="P:GTP biosynthetic process"/>
    <property type="evidence" value="ECO:0007669"/>
    <property type="project" value="InterPro"/>
</dbReference>
<dbReference type="GO" id="GO:0009142">
    <property type="term" value="P:nucleoside triphosphate biosynthetic process"/>
    <property type="evidence" value="ECO:0000250"/>
    <property type="project" value="dictyBase"/>
</dbReference>
<dbReference type="GO" id="GO:0009617">
    <property type="term" value="P:response to bacterium"/>
    <property type="evidence" value="ECO:0007007"/>
    <property type="project" value="dictyBase"/>
</dbReference>
<dbReference type="GO" id="GO:0006228">
    <property type="term" value="P:UTP biosynthetic process"/>
    <property type="evidence" value="ECO:0007669"/>
    <property type="project" value="InterPro"/>
</dbReference>
<dbReference type="CDD" id="cd04413">
    <property type="entry name" value="NDPk_I"/>
    <property type="match status" value="1"/>
</dbReference>
<dbReference type="FunFam" id="3.30.70.141:FF:000002">
    <property type="entry name" value="Nucleoside diphosphate kinase"/>
    <property type="match status" value="1"/>
</dbReference>
<dbReference type="Gene3D" id="3.30.70.141">
    <property type="entry name" value="Nucleoside diphosphate kinase-like domain"/>
    <property type="match status" value="1"/>
</dbReference>
<dbReference type="HAMAP" id="MF_00451">
    <property type="entry name" value="NDP_kinase"/>
    <property type="match status" value="1"/>
</dbReference>
<dbReference type="InterPro" id="IPR034907">
    <property type="entry name" value="NDK-like_dom"/>
</dbReference>
<dbReference type="InterPro" id="IPR036850">
    <property type="entry name" value="NDK-like_dom_sf"/>
</dbReference>
<dbReference type="InterPro" id="IPR001564">
    <property type="entry name" value="Nucleoside_diP_kinase"/>
</dbReference>
<dbReference type="InterPro" id="IPR023005">
    <property type="entry name" value="Nucleoside_diP_kinase_AS"/>
</dbReference>
<dbReference type="NCBIfam" id="NF001908">
    <property type="entry name" value="PRK00668.1"/>
    <property type="match status" value="1"/>
</dbReference>
<dbReference type="PANTHER" id="PTHR11349">
    <property type="entry name" value="NUCLEOSIDE DIPHOSPHATE KINASE"/>
    <property type="match status" value="1"/>
</dbReference>
<dbReference type="Pfam" id="PF00334">
    <property type="entry name" value="NDK"/>
    <property type="match status" value="1"/>
</dbReference>
<dbReference type="PRINTS" id="PR01243">
    <property type="entry name" value="NUCDPKINASE"/>
</dbReference>
<dbReference type="SMART" id="SM00562">
    <property type="entry name" value="NDK"/>
    <property type="match status" value="1"/>
</dbReference>
<dbReference type="SUPFAM" id="SSF54919">
    <property type="entry name" value="Nucleoside diphosphate kinase, NDK"/>
    <property type="match status" value="1"/>
</dbReference>
<dbReference type="PROSITE" id="PS00469">
    <property type="entry name" value="NDPK"/>
    <property type="match status" value="1"/>
</dbReference>
<dbReference type="PROSITE" id="PS51374">
    <property type="entry name" value="NDPK_LIKE"/>
    <property type="match status" value="1"/>
</dbReference>